<dbReference type="EC" id="1.17.7.4" evidence="1"/>
<dbReference type="EMBL" id="CP000747">
    <property type="protein sequence ID" value="ACG79302.1"/>
    <property type="molecule type" value="Genomic_DNA"/>
</dbReference>
<dbReference type="RefSeq" id="WP_012523440.1">
    <property type="nucleotide sequence ID" value="NC_011144.1"/>
</dbReference>
<dbReference type="SMR" id="B4R8T7"/>
<dbReference type="STRING" id="450851.PHZ_c2893"/>
<dbReference type="KEGG" id="pzu:PHZ_c2893"/>
<dbReference type="eggNOG" id="COG0761">
    <property type="taxonomic scope" value="Bacteria"/>
</dbReference>
<dbReference type="HOGENOM" id="CLU_027486_1_0_5"/>
<dbReference type="OrthoDB" id="9804068at2"/>
<dbReference type="UniPathway" id="UPA00056">
    <property type="reaction ID" value="UER00097"/>
</dbReference>
<dbReference type="UniPathway" id="UPA00059">
    <property type="reaction ID" value="UER00105"/>
</dbReference>
<dbReference type="Proteomes" id="UP000001868">
    <property type="component" value="Chromosome"/>
</dbReference>
<dbReference type="GO" id="GO:0051539">
    <property type="term" value="F:4 iron, 4 sulfur cluster binding"/>
    <property type="evidence" value="ECO:0007669"/>
    <property type="project" value="UniProtKB-UniRule"/>
</dbReference>
<dbReference type="GO" id="GO:0051745">
    <property type="term" value="F:4-hydroxy-3-methylbut-2-enyl diphosphate reductase activity"/>
    <property type="evidence" value="ECO:0007669"/>
    <property type="project" value="UniProtKB-UniRule"/>
</dbReference>
<dbReference type="GO" id="GO:0046872">
    <property type="term" value="F:metal ion binding"/>
    <property type="evidence" value="ECO:0007669"/>
    <property type="project" value="UniProtKB-KW"/>
</dbReference>
<dbReference type="GO" id="GO:0050992">
    <property type="term" value="P:dimethylallyl diphosphate biosynthetic process"/>
    <property type="evidence" value="ECO:0007669"/>
    <property type="project" value="UniProtKB-UniRule"/>
</dbReference>
<dbReference type="GO" id="GO:0019288">
    <property type="term" value="P:isopentenyl diphosphate biosynthetic process, methylerythritol 4-phosphate pathway"/>
    <property type="evidence" value="ECO:0007669"/>
    <property type="project" value="UniProtKB-UniRule"/>
</dbReference>
<dbReference type="GO" id="GO:0016114">
    <property type="term" value="P:terpenoid biosynthetic process"/>
    <property type="evidence" value="ECO:0007669"/>
    <property type="project" value="UniProtKB-UniRule"/>
</dbReference>
<dbReference type="CDD" id="cd13944">
    <property type="entry name" value="lytB_ispH"/>
    <property type="match status" value="1"/>
</dbReference>
<dbReference type="Gene3D" id="3.40.50.11270">
    <property type="match status" value="1"/>
</dbReference>
<dbReference type="Gene3D" id="3.40.1010.20">
    <property type="entry name" value="4-hydroxy-3-methylbut-2-enyl diphosphate reductase, catalytic domain"/>
    <property type="match status" value="2"/>
</dbReference>
<dbReference type="HAMAP" id="MF_00191">
    <property type="entry name" value="IspH"/>
    <property type="match status" value="1"/>
</dbReference>
<dbReference type="InterPro" id="IPR003451">
    <property type="entry name" value="LytB/IspH"/>
</dbReference>
<dbReference type="NCBIfam" id="TIGR00216">
    <property type="entry name" value="ispH_lytB"/>
    <property type="match status" value="1"/>
</dbReference>
<dbReference type="NCBIfam" id="NF002188">
    <property type="entry name" value="PRK01045.1-2"/>
    <property type="match status" value="1"/>
</dbReference>
<dbReference type="NCBIfam" id="NF002190">
    <property type="entry name" value="PRK01045.1-4"/>
    <property type="match status" value="1"/>
</dbReference>
<dbReference type="PANTHER" id="PTHR30426">
    <property type="entry name" value="4-HYDROXY-3-METHYLBUT-2-ENYL DIPHOSPHATE REDUCTASE"/>
    <property type="match status" value="1"/>
</dbReference>
<dbReference type="PANTHER" id="PTHR30426:SF0">
    <property type="entry name" value="4-HYDROXY-3-METHYLBUT-2-ENYL DIPHOSPHATE REDUCTASE"/>
    <property type="match status" value="1"/>
</dbReference>
<dbReference type="Pfam" id="PF02401">
    <property type="entry name" value="LYTB"/>
    <property type="match status" value="1"/>
</dbReference>
<comment type="function">
    <text evidence="1">Catalyzes the conversion of 1-hydroxy-2-methyl-2-(E)-butenyl 4-diphosphate (HMBPP) into a mixture of isopentenyl diphosphate (IPP) and dimethylallyl diphosphate (DMAPP). Acts in the terminal step of the DOXP/MEP pathway for isoprenoid precursor biosynthesis.</text>
</comment>
<comment type="catalytic activity">
    <reaction evidence="1">
        <text>isopentenyl diphosphate + 2 oxidized [2Fe-2S]-[ferredoxin] + H2O = (2E)-4-hydroxy-3-methylbut-2-enyl diphosphate + 2 reduced [2Fe-2S]-[ferredoxin] + 2 H(+)</text>
        <dbReference type="Rhea" id="RHEA:24488"/>
        <dbReference type="Rhea" id="RHEA-COMP:10000"/>
        <dbReference type="Rhea" id="RHEA-COMP:10001"/>
        <dbReference type="ChEBI" id="CHEBI:15377"/>
        <dbReference type="ChEBI" id="CHEBI:15378"/>
        <dbReference type="ChEBI" id="CHEBI:33737"/>
        <dbReference type="ChEBI" id="CHEBI:33738"/>
        <dbReference type="ChEBI" id="CHEBI:128753"/>
        <dbReference type="ChEBI" id="CHEBI:128769"/>
        <dbReference type="EC" id="1.17.7.4"/>
    </reaction>
</comment>
<comment type="catalytic activity">
    <reaction evidence="1">
        <text>dimethylallyl diphosphate + 2 oxidized [2Fe-2S]-[ferredoxin] + H2O = (2E)-4-hydroxy-3-methylbut-2-enyl diphosphate + 2 reduced [2Fe-2S]-[ferredoxin] + 2 H(+)</text>
        <dbReference type="Rhea" id="RHEA:24825"/>
        <dbReference type="Rhea" id="RHEA-COMP:10000"/>
        <dbReference type="Rhea" id="RHEA-COMP:10001"/>
        <dbReference type="ChEBI" id="CHEBI:15377"/>
        <dbReference type="ChEBI" id="CHEBI:15378"/>
        <dbReference type="ChEBI" id="CHEBI:33737"/>
        <dbReference type="ChEBI" id="CHEBI:33738"/>
        <dbReference type="ChEBI" id="CHEBI:57623"/>
        <dbReference type="ChEBI" id="CHEBI:128753"/>
        <dbReference type="EC" id="1.17.7.4"/>
    </reaction>
</comment>
<comment type="cofactor">
    <cofactor evidence="1">
        <name>[4Fe-4S] cluster</name>
        <dbReference type="ChEBI" id="CHEBI:49883"/>
    </cofactor>
    <text evidence="1">Binds 1 [4Fe-4S] cluster per subunit.</text>
</comment>
<comment type="pathway">
    <text evidence="1">Isoprenoid biosynthesis; dimethylallyl diphosphate biosynthesis; dimethylallyl diphosphate from (2E)-4-hydroxy-3-methylbutenyl diphosphate: step 1/1.</text>
</comment>
<comment type="pathway">
    <text evidence="1">Isoprenoid biosynthesis; isopentenyl diphosphate biosynthesis via DXP pathway; isopentenyl diphosphate from 1-deoxy-D-xylulose 5-phosphate: step 6/6.</text>
</comment>
<comment type="similarity">
    <text evidence="1">Belongs to the IspH family.</text>
</comment>
<proteinExistence type="inferred from homology"/>
<evidence type="ECO:0000255" key="1">
    <source>
        <dbReference type="HAMAP-Rule" id="MF_00191"/>
    </source>
</evidence>
<protein>
    <recommendedName>
        <fullName evidence="1">4-hydroxy-3-methylbut-2-enyl diphosphate reductase</fullName>
        <shortName evidence="1">HMBPP reductase</shortName>
        <ecNumber evidence="1">1.17.7.4</ecNumber>
    </recommendedName>
</protein>
<reference key="1">
    <citation type="journal article" date="2008" name="BMC Genomics">
        <title>Complete genome of Phenylobacterium zucineum - a novel facultative intracellular bacterium isolated from human erythroleukemia cell line K562.</title>
        <authorList>
            <person name="Luo Y."/>
            <person name="Xu X."/>
            <person name="Ding Z."/>
            <person name="Liu Z."/>
            <person name="Zhang B."/>
            <person name="Yan Z."/>
            <person name="Sun J."/>
            <person name="Hu S."/>
            <person name="Hu X."/>
        </authorList>
    </citation>
    <scope>NUCLEOTIDE SEQUENCE [LARGE SCALE GENOMIC DNA]</scope>
    <source>
        <strain>HLK1</strain>
    </source>
</reference>
<organism>
    <name type="scientific">Phenylobacterium zucineum (strain HLK1)</name>
    <dbReference type="NCBI Taxonomy" id="450851"/>
    <lineage>
        <taxon>Bacteria</taxon>
        <taxon>Pseudomonadati</taxon>
        <taxon>Pseudomonadota</taxon>
        <taxon>Alphaproteobacteria</taxon>
        <taxon>Caulobacterales</taxon>
        <taxon>Caulobacteraceae</taxon>
        <taxon>Phenylobacterium</taxon>
    </lineage>
</organism>
<feature type="chain" id="PRO_1000098962" description="4-hydroxy-3-methylbut-2-enyl diphosphate reductase">
    <location>
        <begin position="1"/>
        <end position="314"/>
    </location>
</feature>
<feature type="active site" description="Proton donor" evidence="1">
    <location>
        <position position="132"/>
    </location>
</feature>
<feature type="binding site" evidence="1">
    <location>
        <position position="18"/>
    </location>
    <ligand>
        <name>[4Fe-4S] cluster</name>
        <dbReference type="ChEBI" id="CHEBI:49883"/>
    </ligand>
</feature>
<feature type="binding site" evidence="1">
    <location>
        <position position="47"/>
    </location>
    <ligand>
        <name>(2E)-4-hydroxy-3-methylbut-2-enyl diphosphate</name>
        <dbReference type="ChEBI" id="CHEBI:128753"/>
    </ligand>
</feature>
<feature type="binding site" evidence="1">
    <location>
        <position position="47"/>
    </location>
    <ligand>
        <name>dimethylallyl diphosphate</name>
        <dbReference type="ChEBI" id="CHEBI:57623"/>
    </ligand>
</feature>
<feature type="binding site" evidence="1">
    <location>
        <position position="47"/>
    </location>
    <ligand>
        <name>isopentenyl diphosphate</name>
        <dbReference type="ChEBI" id="CHEBI:128769"/>
    </ligand>
</feature>
<feature type="binding site" evidence="1">
    <location>
        <position position="80"/>
    </location>
    <ligand>
        <name>(2E)-4-hydroxy-3-methylbut-2-enyl diphosphate</name>
        <dbReference type="ChEBI" id="CHEBI:128753"/>
    </ligand>
</feature>
<feature type="binding site" evidence="1">
    <location>
        <position position="80"/>
    </location>
    <ligand>
        <name>dimethylallyl diphosphate</name>
        <dbReference type="ChEBI" id="CHEBI:57623"/>
    </ligand>
</feature>
<feature type="binding site" evidence="1">
    <location>
        <position position="80"/>
    </location>
    <ligand>
        <name>isopentenyl diphosphate</name>
        <dbReference type="ChEBI" id="CHEBI:128769"/>
    </ligand>
</feature>
<feature type="binding site" evidence="1">
    <location>
        <position position="102"/>
    </location>
    <ligand>
        <name>[4Fe-4S] cluster</name>
        <dbReference type="ChEBI" id="CHEBI:49883"/>
    </ligand>
</feature>
<feature type="binding site" evidence="1">
    <location>
        <position position="130"/>
    </location>
    <ligand>
        <name>(2E)-4-hydroxy-3-methylbut-2-enyl diphosphate</name>
        <dbReference type="ChEBI" id="CHEBI:128753"/>
    </ligand>
</feature>
<feature type="binding site" evidence="1">
    <location>
        <position position="130"/>
    </location>
    <ligand>
        <name>dimethylallyl diphosphate</name>
        <dbReference type="ChEBI" id="CHEBI:57623"/>
    </ligand>
</feature>
<feature type="binding site" evidence="1">
    <location>
        <position position="130"/>
    </location>
    <ligand>
        <name>isopentenyl diphosphate</name>
        <dbReference type="ChEBI" id="CHEBI:128769"/>
    </ligand>
</feature>
<feature type="binding site" evidence="1">
    <location>
        <position position="171"/>
    </location>
    <ligand>
        <name>(2E)-4-hydroxy-3-methylbut-2-enyl diphosphate</name>
        <dbReference type="ChEBI" id="CHEBI:128753"/>
    </ligand>
</feature>
<feature type="binding site" evidence="1">
    <location>
        <position position="201"/>
    </location>
    <ligand>
        <name>[4Fe-4S] cluster</name>
        <dbReference type="ChEBI" id="CHEBI:49883"/>
    </ligand>
</feature>
<feature type="binding site" evidence="1">
    <location>
        <position position="229"/>
    </location>
    <ligand>
        <name>(2E)-4-hydroxy-3-methylbut-2-enyl diphosphate</name>
        <dbReference type="ChEBI" id="CHEBI:128753"/>
    </ligand>
</feature>
<feature type="binding site" evidence="1">
    <location>
        <position position="229"/>
    </location>
    <ligand>
        <name>dimethylallyl diphosphate</name>
        <dbReference type="ChEBI" id="CHEBI:57623"/>
    </ligand>
</feature>
<feature type="binding site" evidence="1">
    <location>
        <position position="229"/>
    </location>
    <ligand>
        <name>isopentenyl diphosphate</name>
        <dbReference type="ChEBI" id="CHEBI:128769"/>
    </ligand>
</feature>
<feature type="binding site" evidence="1">
    <location>
        <position position="230"/>
    </location>
    <ligand>
        <name>(2E)-4-hydroxy-3-methylbut-2-enyl diphosphate</name>
        <dbReference type="ChEBI" id="CHEBI:128753"/>
    </ligand>
</feature>
<feature type="binding site" evidence="1">
    <location>
        <position position="230"/>
    </location>
    <ligand>
        <name>dimethylallyl diphosphate</name>
        <dbReference type="ChEBI" id="CHEBI:57623"/>
    </ligand>
</feature>
<feature type="binding site" evidence="1">
    <location>
        <position position="230"/>
    </location>
    <ligand>
        <name>isopentenyl diphosphate</name>
        <dbReference type="ChEBI" id="CHEBI:128769"/>
    </ligand>
</feature>
<feature type="binding site" evidence="1">
    <location>
        <position position="231"/>
    </location>
    <ligand>
        <name>(2E)-4-hydroxy-3-methylbut-2-enyl diphosphate</name>
        <dbReference type="ChEBI" id="CHEBI:128753"/>
    </ligand>
</feature>
<feature type="binding site" evidence="1">
    <location>
        <position position="231"/>
    </location>
    <ligand>
        <name>dimethylallyl diphosphate</name>
        <dbReference type="ChEBI" id="CHEBI:57623"/>
    </ligand>
</feature>
<feature type="binding site" evidence="1">
    <location>
        <position position="231"/>
    </location>
    <ligand>
        <name>isopentenyl diphosphate</name>
        <dbReference type="ChEBI" id="CHEBI:128769"/>
    </ligand>
</feature>
<feature type="binding site" evidence="1">
    <location>
        <position position="273"/>
    </location>
    <ligand>
        <name>(2E)-4-hydroxy-3-methylbut-2-enyl diphosphate</name>
        <dbReference type="ChEBI" id="CHEBI:128753"/>
    </ligand>
</feature>
<feature type="binding site" evidence="1">
    <location>
        <position position="273"/>
    </location>
    <ligand>
        <name>dimethylallyl diphosphate</name>
        <dbReference type="ChEBI" id="CHEBI:57623"/>
    </ligand>
</feature>
<feature type="binding site" evidence="1">
    <location>
        <position position="273"/>
    </location>
    <ligand>
        <name>isopentenyl diphosphate</name>
        <dbReference type="ChEBI" id="CHEBI:128769"/>
    </ligand>
</feature>
<keyword id="KW-0004">4Fe-4S</keyword>
<keyword id="KW-0408">Iron</keyword>
<keyword id="KW-0411">Iron-sulfur</keyword>
<keyword id="KW-0414">Isoprene biosynthesis</keyword>
<keyword id="KW-0479">Metal-binding</keyword>
<keyword id="KW-0560">Oxidoreductase</keyword>
<keyword id="KW-1185">Reference proteome</keyword>
<sequence>MPSRPPLTVLLASPRGFCAGVDRAIQIVERAIEKYGAPVYVRHEIVHNRHVVERLKALGAVFVEELDQAPDDRPVVFSAHGVPKSVPAAAKSRRMLYLDATCPLVSKVHVEAQRHFDAGREIVLIGHAGHPEVVGTMGQLPEGAVALIETVADAMAFQPRDPANVAFVTQTTLSVDDTAEIVEALRARFPAIAAPHKEDICYATTNRQEAVKAIAAKAQVLVVLGSANSSNSVRLAEVGRRAGARAYLIDDAEGLDFTWLEGVETVGVTAGASAPEVLVQGVLDRLAERFEVTLTEADTARETVTFKLPRALAG</sequence>
<name>ISPH_PHEZH</name>
<gene>
    <name evidence="1" type="primary">ispH</name>
    <name type="ordered locus">PHZ_c2893</name>
</gene>
<accession>B4R8T7</accession>